<name>PANC_LEPIC</name>
<dbReference type="EC" id="6.3.2.1" evidence="1"/>
<dbReference type="EMBL" id="AE016823">
    <property type="protein sequence ID" value="AAS70052.1"/>
    <property type="molecule type" value="Genomic_DNA"/>
</dbReference>
<dbReference type="RefSeq" id="WP_000634421.1">
    <property type="nucleotide sequence ID" value="NC_005823.1"/>
</dbReference>
<dbReference type="SMR" id="Q72SD0"/>
<dbReference type="GeneID" id="61144755"/>
<dbReference type="KEGG" id="lic:LIC_11454"/>
<dbReference type="HOGENOM" id="CLU_047148_0_0_12"/>
<dbReference type="UniPathway" id="UPA00028">
    <property type="reaction ID" value="UER00005"/>
</dbReference>
<dbReference type="Proteomes" id="UP000007037">
    <property type="component" value="Chromosome I"/>
</dbReference>
<dbReference type="GO" id="GO:0005829">
    <property type="term" value="C:cytosol"/>
    <property type="evidence" value="ECO:0007669"/>
    <property type="project" value="TreeGrafter"/>
</dbReference>
<dbReference type="GO" id="GO:0005524">
    <property type="term" value="F:ATP binding"/>
    <property type="evidence" value="ECO:0007669"/>
    <property type="project" value="UniProtKB-KW"/>
</dbReference>
<dbReference type="GO" id="GO:0004592">
    <property type="term" value="F:pantoate-beta-alanine ligase activity"/>
    <property type="evidence" value="ECO:0007669"/>
    <property type="project" value="UniProtKB-UniRule"/>
</dbReference>
<dbReference type="GO" id="GO:0015940">
    <property type="term" value="P:pantothenate biosynthetic process"/>
    <property type="evidence" value="ECO:0007669"/>
    <property type="project" value="UniProtKB-UniRule"/>
</dbReference>
<dbReference type="CDD" id="cd00560">
    <property type="entry name" value="PanC"/>
    <property type="match status" value="1"/>
</dbReference>
<dbReference type="FunFam" id="3.30.1300.10:FF:000009">
    <property type="entry name" value="Pantothenate synthetase"/>
    <property type="match status" value="1"/>
</dbReference>
<dbReference type="FunFam" id="3.40.50.620:FF:000114">
    <property type="entry name" value="Pantothenate synthetase"/>
    <property type="match status" value="1"/>
</dbReference>
<dbReference type="Gene3D" id="3.40.50.620">
    <property type="entry name" value="HUPs"/>
    <property type="match status" value="1"/>
</dbReference>
<dbReference type="Gene3D" id="3.30.1300.10">
    <property type="entry name" value="Pantoate-beta-alanine ligase, C-terminal domain"/>
    <property type="match status" value="1"/>
</dbReference>
<dbReference type="HAMAP" id="MF_00158">
    <property type="entry name" value="PanC"/>
    <property type="match status" value="1"/>
</dbReference>
<dbReference type="InterPro" id="IPR004821">
    <property type="entry name" value="Cyt_trans-like"/>
</dbReference>
<dbReference type="InterPro" id="IPR003721">
    <property type="entry name" value="Pantoate_ligase"/>
</dbReference>
<dbReference type="InterPro" id="IPR042176">
    <property type="entry name" value="Pantoate_ligase_C"/>
</dbReference>
<dbReference type="InterPro" id="IPR014729">
    <property type="entry name" value="Rossmann-like_a/b/a_fold"/>
</dbReference>
<dbReference type="NCBIfam" id="TIGR00125">
    <property type="entry name" value="cyt_tran_rel"/>
    <property type="match status" value="1"/>
</dbReference>
<dbReference type="NCBIfam" id="TIGR00018">
    <property type="entry name" value="panC"/>
    <property type="match status" value="1"/>
</dbReference>
<dbReference type="PANTHER" id="PTHR21299">
    <property type="entry name" value="CYTIDYLATE KINASE/PANTOATE-BETA-ALANINE LIGASE"/>
    <property type="match status" value="1"/>
</dbReference>
<dbReference type="PANTHER" id="PTHR21299:SF1">
    <property type="entry name" value="PANTOATE--BETA-ALANINE LIGASE"/>
    <property type="match status" value="1"/>
</dbReference>
<dbReference type="Pfam" id="PF02569">
    <property type="entry name" value="Pantoate_ligase"/>
    <property type="match status" value="1"/>
</dbReference>
<dbReference type="SUPFAM" id="SSF52374">
    <property type="entry name" value="Nucleotidylyl transferase"/>
    <property type="match status" value="1"/>
</dbReference>
<gene>
    <name evidence="1" type="primary">panC</name>
    <name type="ordered locus">LIC_11454</name>
</gene>
<feature type="chain" id="PRO_0000305475" description="Pantothenate synthetase">
    <location>
        <begin position="1"/>
        <end position="285"/>
    </location>
</feature>
<feature type="active site" description="Proton donor" evidence="1">
    <location>
        <position position="37"/>
    </location>
</feature>
<feature type="binding site" evidence="1">
    <location>
        <begin position="30"/>
        <end position="37"/>
    </location>
    <ligand>
        <name>ATP</name>
        <dbReference type="ChEBI" id="CHEBI:30616"/>
    </ligand>
</feature>
<feature type="binding site" evidence="1">
    <location>
        <position position="61"/>
    </location>
    <ligand>
        <name>(R)-pantoate</name>
        <dbReference type="ChEBI" id="CHEBI:15980"/>
    </ligand>
</feature>
<feature type="binding site" evidence="1">
    <location>
        <position position="61"/>
    </location>
    <ligand>
        <name>beta-alanine</name>
        <dbReference type="ChEBI" id="CHEBI:57966"/>
    </ligand>
</feature>
<feature type="binding site" evidence="1">
    <location>
        <begin position="148"/>
        <end position="151"/>
    </location>
    <ligand>
        <name>ATP</name>
        <dbReference type="ChEBI" id="CHEBI:30616"/>
    </ligand>
</feature>
<feature type="binding site" evidence="1">
    <location>
        <position position="154"/>
    </location>
    <ligand>
        <name>(R)-pantoate</name>
        <dbReference type="ChEBI" id="CHEBI:15980"/>
    </ligand>
</feature>
<feature type="binding site" evidence="1">
    <location>
        <position position="177"/>
    </location>
    <ligand>
        <name>ATP</name>
        <dbReference type="ChEBI" id="CHEBI:30616"/>
    </ligand>
</feature>
<feature type="binding site" evidence="1">
    <location>
        <begin position="185"/>
        <end position="188"/>
    </location>
    <ligand>
        <name>ATP</name>
        <dbReference type="ChEBI" id="CHEBI:30616"/>
    </ligand>
</feature>
<accession>Q72SD0</accession>
<comment type="function">
    <text evidence="1">Catalyzes the condensation of pantoate with beta-alanine in an ATP-dependent reaction via a pantoyl-adenylate intermediate.</text>
</comment>
<comment type="catalytic activity">
    <reaction evidence="1">
        <text>(R)-pantoate + beta-alanine + ATP = (R)-pantothenate + AMP + diphosphate + H(+)</text>
        <dbReference type="Rhea" id="RHEA:10912"/>
        <dbReference type="ChEBI" id="CHEBI:15378"/>
        <dbReference type="ChEBI" id="CHEBI:15980"/>
        <dbReference type="ChEBI" id="CHEBI:29032"/>
        <dbReference type="ChEBI" id="CHEBI:30616"/>
        <dbReference type="ChEBI" id="CHEBI:33019"/>
        <dbReference type="ChEBI" id="CHEBI:57966"/>
        <dbReference type="ChEBI" id="CHEBI:456215"/>
        <dbReference type="EC" id="6.3.2.1"/>
    </reaction>
</comment>
<comment type="pathway">
    <text evidence="1">Cofactor biosynthesis; (R)-pantothenate biosynthesis; (R)-pantothenate from (R)-pantoate and beta-alanine: step 1/1.</text>
</comment>
<comment type="subunit">
    <text evidence="1">Homodimer.</text>
</comment>
<comment type="subcellular location">
    <subcellularLocation>
        <location evidence="1">Cytoplasm</location>
    </subcellularLocation>
</comment>
<comment type="miscellaneous">
    <text evidence="1">The reaction proceeds by a bi uni uni bi ping pong mechanism.</text>
</comment>
<comment type="similarity">
    <text evidence="1">Belongs to the pantothenate synthetase family.</text>
</comment>
<keyword id="KW-0067">ATP-binding</keyword>
<keyword id="KW-0963">Cytoplasm</keyword>
<keyword id="KW-0436">Ligase</keyword>
<keyword id="KW-0547">Nucleotide-binding</keyword>
<keyword id="KW-0566">Pantothenate biosynthesis</keyword>
<organism>
    <name type="scientific">Leptospira interrogans serogroup Icterohaemorrhagiae serovar copenhageni (strain Fiocruz L1-130)</name>
    <dbReference type="NCBI Taxonomy" id="267671"/>
    <lineage>
        <taxon>Bacteria</taxon>
        <taxon>Pseudomonadati</taxon>
        <taxon>Spirochaetota</taxon>
        <taxon>Spirochaetia</taxon>
        <taxon>Leptospirales</taxon>
        <taxon>Leptospiraceae</taxon>
        <taxon>Leptospira</taxon>
    </lineage>
</organism>
<evidence type="ECO:0000255" key="1">
    <source>
        <dbReference type="HAMAP-Rule" id="MF_00158"/>
    </source>
</evidence>
<reference key="1">
    <citation type="journal article" date="2004" name="J. Bacteriol.">
        <title>Comparative genomics of two Leptospira interrogans serovars reveals novel insights into physiology and pathogenesis.</title>
        <authorList>
            <person name="Nascimento A.L.T.O."/>
            <person name="Ko A.I."/>
            <person name="Martins E.A.L."/>
            <person name="Monteiro-Vitorello C.B."/>
            <person name="Ho P.L."/>
            <person name="Haake D.A."/>
            <person name="Verjovski-Almeida S."/>
            <person name="Hartskeerl R.A."/>
            <person name="Marques M.V."/>
            <person name="Oliveira M.C."/>
            <person name="Menck C.F.M."/>
            <person name="Leite L.C.C."/>
            <person name="Carrer H."/>
            <person name="Coutinho L.L."/>
            <person name="Degrave W.M."/>
            <person name="Dellagostin O.A."/>
            <person name="El-Dorry H."/>
            <person name="Ferro E.S."/>
            <person name="Ferro M.I.T."/>
            <person name="Furlan L.R."/>
            <person name="Gamberini M."/>
            <person name="Giglioti E.A."/>
            <person name="Goes-Neto A."/>
            <person name="Goldman G.H."/>
            <person name="Goldman M.H.S."/>
            <person name="Harakava R."/>
            <person name="Jeronimo S.M.B."/>
            <person name="Junqueira-de-Azevedo I.L.M."/>
            <person name="Kimura E.T."/>
            <person name="Kuramae E.E."/>
            <person name="Lemos E.G.M."/>
            <person name="Lemos M.V.F."/>
            <person name="Marino C.L."/>
            <person name="Nunes L.R."/>
            <person name="de Oliveira R.C."/>
            <person name="Pereira G.G."/>
            <person name="Reis M.S."/>
            <person name="Schriefer A."/>
            <person name="Siqueira W.J."/>
            <person name="Sommer P."/>
            <person name="Tsai S.M."/>
            <person name="Simpson A.J.G."/>
            <person name="Ferro J.A."/>
            <person name="Camargo L.E.A."/>
            <person name="Kitajima J.P."/>
            <person name="Setubal J.C."/>
            <person name="Van Sluys M.A."/>
        </authorList>
    </citation>
    <scope>NUCLEOTIDE SEQUENCE [LARGE SCALE GENOMIC DNA]</scope>
    <source>
        <strain>Fiocruz L1-130</strain>
    </source>
</reference>
<sequence>MIVCKIPEEVLDQVRLWKAQGKRIGFVPTMGFLHEGHAYLFEECISKADKTVVSIFVNPAQFNDPEDYAKYPVNTEGDLKLCESKKVDLVFLPDKETIYPDGIPDIVLKIPNLMKSLCAVSRPGHFEGVLLVISRLFHFVQPDFAFFGKKDYQQYLLIREFCNTLAFPIEVIGCETVRSSQGLALSSRNSRLSETEKEESLLIYRSLKLGENQIFSGIKNPLLVKEIMKDVLDSSSKIRLDYLEILNADTLDPLEVLEGEILLAIAAFIGPVRLIDNLTLSVPIS</sequence>
<proteinExistence type="inferred from homology"/>
<protein>
    <recommendedName>
        <fullName evidence="1">Pantothenate synthetase</fullName>
        <shortName evidence="1">PS</shortName>
        <ecNumber evidence="1">6.3.2.1</ecNumber>
    </recommendedName>
    <alternativeName>
        <fullName evidence="1">Pantoate--beta-alanine ligase</fullName>
    </alternativeName>
    <alternativeName>
        <fullName evidence="1">Pantoate-activating enzyme</fullName>
    </alternativeName>
</protein>